<proteinExistence type="evidence at protein level"/>
<comment type="function">
    <text evidence="4">As part of the pyruvate dehydrogenase complex, catalyzes the transfers of an acetyl group to a lipoic acid moiety. The pyruvate dehydrogenase complex, catalyzes the overall conversion of pyruvate to acetyl-CoA and CO(2), and thereby links cytoplasmic glycolysis and the mitochondrial tricarboxylic acid (TCA) cycle.</text>
</comment>
<comment type="catalytic activity">
    <reaction evidence="4">
        <text>N(6)-[(R)-dihydrolipoyl]-L-lysyl-[protein] + acetyl-CoA = N(6)-[(R)-S(8)-acetyldihydrolipoyl]-L-lysyl-[protein] + CoA</text>
        <dbReference type="Rhea" id="RHEA:17017"/>
        <dbReference type="Rhea" id="RHEA-COMP:10475"/>
        <dbReference type="Rhea" id="RHEA-COMP:10478"/>
        <dbReference type="ChEBI" id="CHEBI:57287"/>
        <dbReference type="ChEBI" id="CHEBI:57288"/>
        <dbReference type="ChEBI" id="CHEBI:83100"/>
        <dbReference type="ChEBI" id="CHEBI:83111"/>
        <dbReference type="EC" id="2.3.1.12"/>
    </reaction>
    <physiologicalReaction direction="left-to-right" evidence="4">
        <dbReference type="Rhea" id="RHEA:17018"/>
    </physiologicalReaction>
</comment>
<comment type="cofactor">
    <cofactor evidence="3">
        <name>(R)-lipoate</name>
        <dbReference type="ChEBI" id="CHEBI:83088"/>
    </cofactor>
    <text evidence="3">Binds 2 lipoyl cofactors covalently.</text>
</comment>
<comment type="subunit">
    <text evidence="3 4">Part of the pyruvate dehydrogenase complex (PDHc) that is a multi-enzyme complex composed of multiple copies of three enzymes, pyruvate dehydrogenase (subunits PDH1A and PDHB, E1 component), dihydrolipoamide acetyltransferase (DLAT, E2 component), and dihydrolipoamide dehydrogenase (DLD, E3 component) to which is added an additional protein the E3-binding protein (PDHX, E3BP) (By similarity). In terms of structural architecture, the E2 and E3BP components assemble into a 60meric central core with icosahedral symmetry (By similarity). The central core is decorated with E1 and E3 proteins (By similarity). Currently, two alternative models for the E2:E3BP stoichiometry are considered as being either 48:12 (E2(48)-E3BP(12)) or 40:20 (E2(40)-E3BP(20)). Interacts with PDK2 and PDK3. Interacts with SIRT4. Interacts with PDHB (By similarity).</text>
</comment>
<comment type="subcellular location">
    <subcellularLocation>
        <location evidence="2">Mitochondrion matrix</location>
    </subcellularLocation>
</comment>
<comment type="PTM">
    <text evidence="3">Delipoylated at Lys-131 and Lys-258 by SIRT4, delipoylation decreases the PHD complex activity.</text>
</comment>
<comment type="similarity">
    <text evidence="10">Belongs to the 2-oxoacid dehydrogenase family.</text>
</comment>
<organism>
    <name type="scientific">Mus musculus</name>
    <name type="common">Mouse</name>
    <dbReference type="NCBI Taxonomy" id="10090"/>
    <lineage>
        <taxon>Eukaryota</taxon>
        <taxon>Metazoa</taxon>
        <taxon>Chordata</taxon>
        <taxon>Craniata</taxon>
        <taxon>Vertebrata</taxon>
        <taxon>Euteleostomi</taxon>
        <taxon>Mammalia</taxon>
        <taxon>Eutheria</taxon>
        <taxon>Euarchontoglires</taxon>
        <taxon>Glires</taxon>
        <taxon>Rodentia</taxon>
        <taxon>Myomorpha</taxon>
        <taxon>Muroidea</taxon>
        <taxon>Muridae</taxon>
        <taxon>Murinae</taxon>
        <taxon>Mus</taxon>
        <taxon>Mus</taxon>
    </lineage>
</organism>
<name>ODP2_MOUSE</name>
<feature type="transit peptide" description="Mitochondrion" evidence="1">
    <location>
        <begin position="1"/>
        <end position="85"/>
    </location>
</feature>
<feature type="chain" id="PRO_0000285717" description="Dihydrolipoyllysine-residue acetyltransferase component of pyruvate dehydrogenase complex, mitochondrial">
    <location>
        <begin position="86"/>
        <end position="642"/>
    </location>
</feature>
<feature type="domain" description="Lipoyl-binding 1" evidence="7">
    <location>
        <begin position="90"/>
        <end position="166"/>
    </location>
</feature>
<feature type="domain" description="Lipoyl-binding 2" evidence="7">
    <location>
        <begin position="217"/>
        <end position="293"/>
    </location>
</feature>
<feature type="domain" description="Peripheral subunit-binding (PSBD)" evidence="8">
    <location>
        <begin position="351"/>
        <end position="388"/>
    </location>
</feature>
<feature type="region of interest" description="Disordered" evidence="9">
    <location>
        <begin position="80"/>
        <end position="99"/>
    </location>
</feature>
<feature type="region of interest" description="Disordered" evidence="9">
    <location>
        <begin position="313"/>
        <end position="346"/>
    </location>
</feature>
<feature type="compositionally biased region" description="Pro residues" evidence="9">
    <location>
        <begin position="317"/>
        <end position="337"/>
    </location>
</feature>
<feature type="active site" evidence="6">
    <location>
        <position position="615"/>
    </location>
</feature>
<feature type="active site" evidence="6">
    <location>
        <position position="619"/>
    </location>
</feature>
<feature type="binding site" evidence="5">
    <location>
        <position position="456"/>
    </location>
    <ligand>
        <name>CoA</name>
        <dbReference type="ChEBI" id="CHEBI:57287"/>
    </ligand>
</feature>
<feature type="binding site" evidence="5">
    <location>
        <position position="470"/>
    </location>
    <ligand>
        <name>CoA</name>
        <dbReference type="ChEBI" id="CHEBI:57287"/>
    </ligand>
</feature>
<feature type="binding site" evidence="5">
    <location>
        <position position="561"/>
    </location>
    <ligand>
        <name>CoA</name>
        <dbReference type="ChEBI" id="CHEBI:57287"/>
    </ligand>
</feature>
<feature type="binding site" evidence="5">
    <location>
        <position position="562"/>
    </location>
    <ligand>
        <name>CoA</name>
        <dbReference type="ChEBI" id="CHEBI:57287"/>
    </ligand>
</feature>
<feature type="binding site" evidence="5">
    <location>
        <position position="586"/>
    </location>
    <ligand>
        <name>CoA</name>
        <dbReference type="ChEBI" id="CHEBI:57287"/>
    </ligand>
</feature>
<feature type="modified residue" description="Phosphoserine" evidence="3">
    <location>
        <position position="99"/>
    </location>
</feature>
<feature type="modified residue" description="N6-lipoyllysine" evidence="7">
    <location>
        <position position="131"/>
    </location>
</feature>
<feature type="modified residue" description="N6-lipoyllysine" evidence="1 7">
    <location>
        <position position="258"/>
    </location>
</feature>
<feature type="modified residue" description="N6-acetyllysine" evidence="3">
    <location>
        <position position="461"/>
    </location>
</feature>
<feature type="modified residue" description="N6-succinyllysine" evidence="12">
    <location>
        <position position="468"/>
    </location>
</feature>
<feature type="modified residue" description="N6-succinyllysine" evidence="12">
    <location>
        <position position="542"/>
    </location>
</feature>
<feature type="sequence conflict" description="In Ref. 3; AAL02400." evidence="10" ref="3">
    <original>S</original>
    <variation>Y</variation>
    <location>
        <position position="84"/>
    </location>
</feature>
<feature type="sequence conflict" description="In Ref. 1; BAC27715." evidence="10" ref="1">
    <original>P</original>
    <variation>T</variation>
    <location>
        <position position="198"/>
    </location>
</feature>
<feature type="sequence conflict" description="In Ref. 3; AAL02400." evidence="10" ref="3">
    <original>L</original>
    <variation>P</variation>
    <location>
        <position position="225"/>
    </location>
</feature>
<feature type="sequence conflict" description="In Ref. 2; AAH31495." evidence="10" ref="2">
    <original>A</original>
    <variation>V</variation>
    <location>
        <position position="393"/>
    </location>
</feature>
<feature type="sequence conflict" description="In Ref. 2; AAH31495." evidence="10" ref="2">
    <original>A</original>
    <variation>V</variation>
    <location>
        <position position="604"/>
    </location>
</feature>
<evidence type="ECO:0000250" key="1"/>
<evidence type="ECO:0000250" key="2">
    <source>
        <dbReference type="UniProtKB" id="P08461"/>
    </source>
</evidence>
<evidence type="ECO:0000250" key="3">
    <source>
        <dbReference type="UniProtKB" id="P10515"/>
    </source>
</evidence>
<evidence type="ECO:0000250" key="4">
    <source>
        <dbReference type="UniProtKB" id="P11180"/>
    </source>
</evidence>
<evidence type="ECO:0000250" key="5">
    <source>
        <dbReference type="UniProtKB" id="P11181"/>
    </source>
</evidence>
<evidence type="ECO:0000250" key="6">
    <source>
        <dbReference type="UniProtKB" id="Q9N0F1"/>
    </source>
</evidence>
<evidence type="ECO:0000255" key="7">
    <source>
        <dbReference type="PROSITE-ProRule" id="PRU01066"/>
    </source>
</evidence>
<evidence type="ECO:0000255" key="8">
    <source>
        <dbReference type="PROSITE-ProRule" id="PRU01170"/>
    </source>
</evidence>
<evidence type="ECO:0000256" key="9">
    <source>
        <dbReference type="SAM" id="MobiDB-lite"/>
    </source>
</evidence>
<evidence type="ECO:0000305" key="10"/>
<evidence type="ECO:0000312" key="11">
    <source>
        <dbReference type="MGI" id="MGI:2385311"/>
    </source>
</evidence>
<evidence type="ECO:0007744" key="12">
    <source>
    </source>
</evidence>
<gene>
    <name evidence="11" type="primary">Dlat</name>
</gene>
<keyword id="KW-0007">Acetylation</keyword>
<keyword id="KW-0012">Acyltransferase</keyword>
<keyword id="KW-0119">Carbohydrate metabolism</keyword>
<keyword id="KW-0903">Direct protein sequencing</keyword>
<keyword id="KW-0313">Glucose metabolism</keyword>
<keyword id="KW-0450">Lipoyl</keyword>
<keyword id="KW-0496">Mitochondrion</keyword>
<keyword id="KW-0597">Phosphoprotein</keyword>
<keyword id="KW-1185">Reference proteome</keyword>
<keyword id="KW-0677">Repeat</keyword>
<keyword id="KW-0808">Transferase</keyword>
<keyword id="KW-0809">Transit peptide</keyword>
<keyword id="KW-0816">Tricarboxylic acid cycle</keyword>
<dbReference type="EC" id="2.3.1.12" evidence="4"/>
<dbReference type="EMBL" id="AK032124">
    <property type="protein sequence ID" value="BAC27715.1"/>
    <property type="molecule type" value="mRNA"/>
</dbReference>
<dbReference type="EMBL" id="BC026680">
    <property type="protein sequence ID" value="AAH26680.1"/>
    <property type="molecule type" value="mRNA"/>
</dbReference>
<dbReference type="EMBL" id="BC031495">
    <property type="protein sequence ID" value="AAH31495.1"/>
    <property type="molecule type" value="mRNA"/>
</dbReference>
<dbReference type="EMBL" id="BC069862">
    <property type="protein sequence ID" value="AAH69862.1"/>
    <property type="molecule type" value="mRNA"/>
</dbReference>
<dbReference type="EMBL" id="AY044265">
    <property type="protein sequence ID" value="AAL02400.1"/>
    <property type="molecule type" value="mRNA"/>
</dbReference>
<dbReference type="CCDS" id="CCDS23168.1"/>
<dbReference type="RefSeq" id="NP_663589.3">
    <property type="nucleotide sequence ID" value="NM_145614.4"/>
</dbReference>
<dbReference type="SMR" id="Q8BMF4"/>
<dbReference type="BioGRID" id="231646">
    <property type="interactions" value="63"/>
</dbReference>
<dbReference type="FunCoup" id="Q8BMF4">
    <property type="interactions" value="2486"/>
</dbReference>
<dbReference type="IntAct" id="Q8BMF4">
    <property type="interactions" value="7"/>
</dbReference>
<dbReference type="MINT" id="Q8BMF4"/>
<dbReference type="STRING" id="10090.ENSMUSP00000034567"/>
<dbReference type="GlyGen" id="Q8BMF4">
    <property type="glycosylation" value="4 sites, 1 N-linked glycan (1 site), 1 O-linked glycan (1 site)"/>
</dbReference>
<dbReference type="iPTMnet" id="Q8BMF4"/>
<dbReference type="MetOSite" id="Q8BMF4"/>
<dbReference type="PhosphoSitePlus" id="Q8BMF4"/>
<dbReference type="SwissPalm" id="Q8BMF4"/>
<dbReference type="REPRODUCTION-2DPAGE" id="IPI00153660"/>
<dbReference type="jPOST" id="Q8BMF4"/>
<dbReference type="PaxDb" id="10090-ENSMUSP00000034567"/>
<dbReference type="PeptideAtlas" id="Q8BMF4"/>
<dbReference type="ProteomicsDB" id="293495"/>
<dbReference type="Pumba" id="Q8BMF4"/>
<dbReference type="Antibodypedia" id="18282">
    <property type="antibodies" value="339 antibodies from 31 providers"/>
</dbReference>
<dbReference type="DNASU" id="235339"/>
<dbReference type="Ensembl" id="ENSMUST00000034567.4">
    <property type="protein sequence ID" value="ENSMUSP00000034567.4"/>
    <property type="gene ID" value="ENSMUSG00000000168.11"/>
</dbReference>
<dbReference type="GeneID" id="235339"/>
<dbReference type="KEGG" id="mmu:235339"/>
<dbReference type="UCSC" id="uc009pka.2">
    <property type="organism name" value="mouse"/>
</dbReference>
<dbReference type="AGR" id="MGI:2385311"/>
<dbReference type="CTD" id="1737"/>
<dbReference type="MGI" id="MGI:2385311">
    <property type="gene designation" value="Dlat"/>
</dbReference>
<dbReference type="VEuPathDB" id="HostDB:ENSMUSG00000000168"/>
<dbReference type="eggNOG" id="KOG0557">
    <property type="taxonomic scope" value="Eukaryota"/>
</dbReference>
<dbReference type="GeneTree" id="ENSGT00940000154943"/>
<dbReference type="HOGENOM" id="CLU_016733_10_2_1"/>
<dbReference type="InParanoid" id="Q8BMF4"/>
<dbReference type="OMA" id="TMEFESF"/>
<dbReference type="OrthoDB" id="537444at2759"/>
<dbReference type="PhylomeDB" id="Q8BMF4"/>
<dbReference type="TreeFam" id="TF106145"/>
<dbReference type="Reactome" id="R-MMU-204174">
    <property type="pathway name" value="Regulation of pyruvate dehydrogenase (PDH) complex"/>
</dbReference>
<dbReference type="Reactome" id="R-MMU-5362517">
    <property type="pathway name" value="Signaling by Retinoic Acid"/>
</dbReference>
<dbReference type="Reactome" id="R-MMU-9857492">
    <property type="pathway name" value="Protein lipoylation"/>
</dbReference>
<dbReference type="Reactome" id="R-MMU-9861559">
    <property type="pathway name" value="PDH complex synthesizes acetyl-CoA from PYR"/>
</dbReference>
<dbReference type="BioGRID-ORCS" id="235339">
    <property type="hits" value="5 hits in 81 CRISPR screens"/>
</dbReference>
<dbReference type="CD-CODE" id="CE726F99">
    <property type="entry name" value="Postsynaptic density"/>
</dbReference>
<dbReference type="ChiTaRS" id="Dlat">
    <property type="organism name" value="mouse"/>
</dbReference>
<dbReference type="PRO" id="PR:Q8BMF4"/>
<dbReference type="Proteomes" id="UP000000589">
    <property type="component" value="Chromosome 9"/>
</dbReference>
<dbReference type="RNAct" id="Q8BMF4">
    <property type="molecule type" value="protein"/>
</dbReference>
<dbReference type="Bgee" id="ENSMUSG00000000168">
    <property type="expression patterns" value="Expressed in digastric muscle group and 271 other cell types or tissues"/>
</dbReference>
<dbReference type="GO" id="GO:1902493">
    <property type="term" value="C:acetyltransferase complex"/>
    <property type="evidence" value="ECO:0000304"/>
    <property type="project" value="MGI"/>
</dbReference>
<dbReference type="GO" id="GO:0005759">
    <property type="term" value="C:mitochondrial matrix"/>
    <property type="evidence" value="ECO:0000314"/>
    <property type="project" value="MGI"/>
</dbReference>
<dbReference type="GO" id="GO:0005739">
    <property type="term" value="C:mitochondrion"/>
    <property type="evidence" value="ECO:0007005"/>
    <property type="project" value="MGI"/>
</dbReference>
<dbReference type="GO" id="GO:0043209">
    <property type="term" value="C:myelin sheath"/>
    <property type="evidence" value="ECO:0007005"/>
    <property type="project" value="UniProtKB"/>
</dbReference>
<dbReference type="GO" id="GO:0045254">
    <property type="term" value="C:pyruvate dehydrogenase complex"/>
    <property type="evidence" value="ECO:0000266"/>
    <property type="project" value="MGI"/>
</dbReference>
<dbReference type="GO" id="GO:0016407">
    <property type="term" value="F:acetyltransferase activity"/>
    <property type="evidence" value="ECO:0000315"/>
    <property type="project" value="MGI"/>
</dbReference>
<dbReference type="GO" id="GO:0004742">
    <property type="term" value="F:dihydrolipoyllysine-residue acetyltransferase activity"/>
    <property type="evidence" value="ECO:0000250"/>
    <property type="project" value="UniProtKB"/>
</dbReference>
<dbReference type="GO" id="GO:0042802">
    <property type="term" value="F:identical protein binding"/>
    <property type="evidence" value="ECO:0007669"/>
    <property type="project" value="Ensembl"/>
</dbReference>
<dbReference type="GO" id="GO:0034604">
    <property type="term" value="F:pyruvate dehydrogenase (NAD+) activity"/>
    <property type="evidence" value="ECO:0007669"/>
    <property type="project" value="Ensembl"/>
</dbReference>
<dbReference type="GO" id="GO:0006006">
    <property type="term" value="P:glucose metabolic process"/>
    <property type="evidence" value="ECO:0007669"/>
    <property type="project" value="UniProtKB-KW"/>
</dbReference>
<dbReference type="GO" id="GO:0042867">
    <property type="term" value="P:pyruvate catabolic process"/>
    <property type="evidence" value="ECO:0000315"/>
    <property type="project" value="MGI"/>
</dbReference>
<dbReference type="GO" id="GO:0006086">
    <property type="term" value="P:pyruvate decarboxylation to acetyl-CoA"/>
    <property type="evidence" value="ECO:0000315"/>
    <property type="project" value="MGI"/>
</dbReference>
<dbReference type="GO" id="GO:0006099">
    <property type="term" value="P:tricarboxylic acid cycle"/>
    <property type="evidence" value="ECO:0000250"/>
    <property type="project" value="UniProtKB"/>
</dbReference>
<dbReference type="CDD" id="cd06849">
    <property type="entry name" value="lipoyl_domain"/>
    <property type="match status" value="2"/>
</dbReference>
<dbReference type="FunFam" id="2.40.50.100:FF:000010">
    <property type="entry name" value="Acetyltransferase component of pyruvate dehydrogenase complex"/>
    <property type="match status" value="2"/>
</dbReference>
<dbReference type="FunFam" id="3.30.559.10:FF:000003">
    <property type="entry name" value="Acetyltransferase component of pyruvate dehydrogenase complex"/>
    <property type="match status" value="1"/>
</dbReference>
<dbReference type="FunFam" id="4.10.320.10:FF:000005">
    <property type="entry name" value="Acetyltransferase component of pyruvate dehydrogenase complex"/>
    <property type="match status" value="1"/>
</dbReference>
<dbReference type="Gene3D" id="2.40.50.100">
    <property type="match status" value="2"/>
</dbReference>
<dbReference type="Gene3D" id="3.30.559.10">
    <property type="entry name" value="Chloramphenicol acetyltransferase-like domain"/>
    <property type="match status" value="1"/>
</dbReference>
<dbReference type="Gene3D" id="4.10.320.10">
    <property type="entry name" value="E3-binding domain"/>
    <property type="match status" value="1"/>
</dbReference>
<dbReference type="InterPro" id="IPR003016">
    <property type="entry name" value="2-oxoA_DH_lipoyl-BS"/>
</dbReference>
<dbReference type="InterPro" id="IPR001078">
    <property type="entry name" value="2-oxoacid_DH_actylTfrase"/>
</dbReference>
<dbReference type="InterPro" id="IPR000089">
    <property type="entry name" value="Biotin_lipoyl"/>
</dbReference>
<dbReference type="InterPro" id="IPR023213">
    <property type="entry name" value="CAT-like_dom_sf"/>
</dbReference>
<dbReference type="InterPro" id="IPR045257">
    <property type="entry name" value="E2/Pdx1"/>
</dbReference>
<dbReference type="InterPro" id="IPR036625">
    <property type="entry name" value="E3-bd_dom_sf"/>
</dbReference>
<dbReference type="InterPro" id="IPR006257">
    <property type="entry name" value="LAT1"/>
</dbReference>
<dbReference type="InterPro" id="IPR004167">
    <property type="entry name" value="PSBD"/>
</dbReference>
<dbReference type="InterPro" id="IPR011053">
    <property type="entry name" value="Single_hybrid_motif"/>
</dbReference>
<dbReference type="NCBIfam" id="TIGR01349">
    <property type="entry name" value="PDHac_trf_mito"/>
    <property type="match status" value="1"/>
</dbReference>
<dbReference type="PANTHER" id="PTHR23151">
    <property type="entry name" value="DIHYDROLIPOAMIDE ACETYL/SUCCINYL-TRANSFERASE-RELATED"/>
    <property type="match status" value="1"/>
</dbReference>
<dbReference type="PANTHER" id="PTHR23151:SF90">
    <property type="entry name" value="DIHYDROLIPOYLLYSINE-RESIDUE ACETYLTRANSFERASE COMPONENT OF PYRUVATE DEHYDROGENASE COMPLEX, MITOCHONDRIAL-RELATED"/>
    <property type="match status" value="1"/>
</dbReference>
<dbReference type="Pfam" id="PF00198">
    <property type="entry name" value="2-oxoacid_dh"/>
    <property type="match status" value="1"/>
</dbReference>
<dbReference type="Pfam" id="PF00364">
    <property type="entry name" value="Biotin_lipoyl"/>
    <property type="match status" value="2"/>
</dbReference>
<dbReference type="Pfam" id="PF02817">
    <property type="entry name" value="E3_binding"/>
    <property type="match status" value="1"/>
</dbReference>
<dbReference type="SUPFAM" id="SSF52777">
    <property type="entry name" value="CoA-dependent acyltransferases"/>
    <property type="match status" value="1"/>
</dbReference>
<dbReference type="SUPFAM" id="SSF47005">
    <property type="entry name" value="Peripheral subunit-binding domain of 2-oxo acid dehydrogenase complex"/>
    <property type="match status" value="1"/>
</dbReference>
<dbReference type="SUPFAM" id="SSF51230">
    <property type="entry name" value="Single hybrid motif"/>
    <property type="match status" value="2"/>
</dbReference>
<dbReference type="PROSITE" id="PS50968">
    <property type="entry name" value="BIOTINYL_LIPOYL"/>
    <property type="match status" value="2"/>
</dbReference>
<dbReference type="PROSITE" id="PS00189">
    <property type="entry name" value="LIPOYL"/>
    <property type="match status" value="2"/>
</dbReference>
<dbReference type="PROSITE" id="PS51826">
    <property type="entry name" value="PSBD"/>
    <property type="match status" value="1"/>
</dbReference>
<accession>Q8BMF4</accession>
<accession>Q8K2G8</accession>
<accession>Q8R339</accession>
<accession>Q91ZB1</accession>
<reference key="1">
    <citation type="journal article" date="2005" name="Science">
        <title>The transcriptional landscape of the mammalian genome.</title>
        <authorList>
            <person name="Carninci P."/>
            <person name="Kasukawa T."/>
            <person name="Katayama S."/>
            <person name="Gough J."/>
            <person name="Frith M.C."/>
            <person name="Maeda N."/>
            <person name="Oyama R."/>
            <person name="Ravasi T."/>
            <person name="Lenhard B."/>
            <person name="Wells C."/>
            <person name="Kodzius R."/>
            <person name="Shimokawa K."/>
            <person name="Bajic V.B."/>
            <person name="Brenner S.E."/>
            <person name="Batalov S."/>
            <person name="Forrest A.R."/>
            <person name="Zavolan M."/>
            <person name="Davis M.J."/>
            <person name="Wilming L.G."/>
            <person name="Aidinis V."/>
            <person name="Allen J.E."/>
            <person name="Ambesi-Impiombato A."/>
            <person name="Apweiler R."/>
            <person name="Aturaliya R.N."/>
            <person name="Bailey T.L."/>
            <person name="Bansal M."/>
            <person name="Baxter L."/>
            <person name="Beisel K.W."/>
            <person name="Bersano T."/>
            <person name="Bono H."/>
            <person name="Chalk A.M."/>
            <person name="Chiu K.P."/>
            <person name="Choudhary V."/>
            <person name="Christoffels A."/>
            <person name="Clutterbuck D.R."/>
            <person name="Crowe M.L."/>
            <person name="Dalla E."/>
            <person name="Dalrymple B.P."/>
            <person name="de Bono B."/>
            <person name="Della Gatta G."/>
            <person name="di Bernardo D."/>
            <person name="Down T."/>
            <person name="Engstrom P."/>
            <person name="Fagiolini M."/>
            <person name="Faulkner G."/>
            <person name="Fletcher C.F."/>
            <person name="Fukushima T."/>
            <person name="Furuno M."/>
            <person name="Futaki S."/>
            <person name="Gariboldi M."/>
            <person name="Georgii-Hemming P."/>
            <person name="Gingeras T.R."/>
            <person name="Gojobori T."/>
            <person name="Green R.E."/>
            <person name="Gustincich S."/>
            <person name="Harbers M."/>
            <person name="Hayashi Y."/>
            <person name="Hensch T.K."/>
            <person name="Hirokawa N."/>
            <person name="Hill D."/>
            <person name="Huminiecki L."/>
            <person name="Iacono M."/>
            <person name="Ikeo K."/>
            <person name="Iwama A."/>
            <person name="Ishikawa T."/>
            <person name="Jakt M."/>
            <person name="Kanapin A."/>
            <person name="Katoh M."/>
            <person name="Kawasawa Y."/>
            <person name="Kelso J."/>
            <person name="Kitamura H."/>
            <person name="Kitano H."/>
            <person name="Kollias G."/>
            <person name="Krishnan S.P."/>
            <person name="Kruger A."/>
            <person name="Kummerfeld S.K."/>
            <person name="Kurochkin I.V."/>
            <person name="Lareau L.F."/>
            <person name="Lazarevic D."/>
            <person name="Lipovich L."/>
            <person name="Liu J."/>
            <person name="Liuni S."/>
            <person name="McWilliam S."/>
            <person name="Madan Babu M."/>
            <person name="Madera M."/>
            <person name="Marchionni L."/>
            <person name="Matsuda H."/>
            <person name="Matsuzawa S."/>
            <person name="Miki H."/>
            <person name="Mignone F."/>
            <person name="Miyake S."/>
            <person name="Morris K."/>
            <person name="Mottagui-Tabar S."/>
            <person name="Mulder N."/>
            <person name="Nakano N."/>
            <person name="Nakauchi H."/>
            <person name="Ng P."/>
            <person name="Nilsson R."/>
            <person name="Nishiguchi S."/>
            <person name="Nishikawa S."/>
            <person name="Nori F."/>
            <person name="Ohara O."/>
            <person name="Okazaki Y."/>
            <person name="Orlando V."/>
            <person name="Pang K.C."/>
            <person name="Pavan W.J."/>
            <person name="Pavesi G."/>
            <person name="Pesole G."/>
            <person name="Petrovsky N."/>
            <person name="Piazza S."/>
            <person name="Reed J."/>
            <person name="Reid J.F."/>
            <person name="Ring B.Z."/>
            <person name="Ringwald M."/>
            <person name="Rost B."/>
            <person name="Ruan Y."/>
            <person name="Salzberg S.L."/>
            <person name="Sandelin A."/>
            <person name="Schneider C."/>
            <person name="Schoenbach C."/>
            <person name="Sekiguchi K."/>
            <person name="Semple C.A."/>
            <person name="Seno S."/>
            <person name="Sessa L."/>
            <person name="Sheng Y."/>
            <person name="Shibata Y."/>
            <person name="Shimada H."/>
            <person name="Shimada K."/>
            <person name="Silva D."/>
            <person name="Sinclair B."/>
            <person name="Sperling S."/>
            <person name="Stupka E."/>
            <person name="Sugiura K."/>
            <person name="Sultana R."/>
            <person name="Takenaka Y."/>
            <person name="Taki K."/>
            <person name="Tammoja K."/>
            <person name="Tan S.L."/>
            <person name="Tang S."/>
            <person name="Taylor M.S."/>
            <person name="Tegner J."/>
            <person name="Teichmann S.A."/>
            <person name="Ueda H.R."/>
            <person name="van Nimwegen E."/>
            <person name="Verardo R."/>
            <person name="Wei C.L."/>
            <person name="Yagi K."/>
            <person name="Yamanishi H."/>
            <person name="Zabarovsky E."/>
            <person name="Zhu S."/>
            <person name="Zimmer A."/>
            <person name="Hide W."/>
            <person name="Bult C."/>
            <person name="Grimmond S.M."/>
            <person name="Teasdale R.D."/>
            <person name="Liu E.T."/>
            <person name="Brusic V."/>
            <person name="Quackenbush J."/>
            <person name="Wahlestedt C."/>
            <person name="Mattick J.S."/>
            <person name="Hume D.A."/>
            <person name="Kai C."/>
            <person name="Sasaki D."/>
            <person name="Tomaru Y."/>
            <person name="Fukuda S."/>
            <person name="Kanamori-Katayama M."/>
            <person name="Suzuki M."/>
            <person name="Aoki J."/>
            <person name="Arakawa T."/>
            <person name="Iida J."/>
            <person name="Imamura K."/>
            <person name="Itoh M."/>
            <person name="Kato T."/>
            <person name="Kawaji H."/>
            <person name="Kawagashira N."/>
            <person name="Kawashima T."/>
            <person name="Kojima M."/>
            <person name="Kondo S."/>
            <person name="Konno H."/>
            <person name="Nakano K."/>
            <person name="Ninomiya N."/>
            <person name="Nishio T."/>
            <person name="Okada M."/>
            <person name="Plessy C."/>
            <person name="Shibata K."/>
            <person name="Shiraki T."/>
            <person name="Suzuki S."/>
            <person name="Tagami M."/>
            <person name="Waki K."/>
            <person name="Watahiki A."/>
            <person name="Okamura-Oho Y."/>
            <person name="Suzuki H."/>
            <person name="Kawai J."/>
            <person name="Hayashizaki Y."/>
        </authorList>
    </citation>
    <scope>NUCLEOTIDE SEQUENCE [LARGE SCALE MRNA]</scope>
    <source>
        <strain>C57BL/6J</strain>
        <tissue>Medulla oblongata</tissue>
    </source>
</reference>
<reference key="2">
    <citation type="journal article" date="2004" name="Genome Res.">
        <title>The status, quality, and expansion of the NIH full-length cDNA project: the Mammalian Gene Collection (MGC).</title>
        <authorList>
            <consortium name="The MGC Project Team"/>
        </authorList>
    </citation>
    <scope>NUCLEOTIDE SEQUENCE [LARGE SCALE MRNA]</scope>
    <source>
        <strain>Czech II</strain>
        <strain>FVB/N-3</strain>
        <strain>NMRI</strain>
        <tissue>Mammary tumor</tissue>
    </source>
</reference>
<reference key="3">
    <citation type="journal article" date="2002" name="J. Gastroenterol.">
        <title>Molecular cloning, and characterization and expression of dihydrolipoamide acetyltransferase component of murine pyruvate dehydrogenase complex in bile duct cancer cells.</title>
        <authorList>
            <person name="Wang L."/>
            <person name="Kaneko S."/>
            <person name="Kagaya M."/>
            <person name="Ohno H."/>
            <person name="Honda M."/>
            <person name="Kobayashi K."/>
        </authorList>
    </citation>
    <scope>NUCLEOTIDE SEQUENCE [MRNA] OF 84-642</scope>
    <source>
        <tissue>Hepatoma</tissue>
    </source>
</reference>
<reference key="4">
    <citation type="submission" date="2009-01" db="UniProtKB">
        <authorList>
            <person name="Lubec G."/>
            <person name="Klug S."/>
            <person name="Sunyer B."/>
            <person name="Chen W.-Q."/>
        </authorList>
    </citation>
    <scope>PROTEIN SEQUENCE OF 93-109; 147-176; 282-295; 383-424; 469-477; 486-499; 528-542; 548-569; 600-631 AND 633-642</scope>
    <scope>IDENTIFICATION BY MASS SPECTROMETRY</scope>
    <source>
        <strain>OF1</strain>
        <tissue>Hippocampus</tissue>
    </source>
</reference>
<reference key="5">
    <citation type="journal article" date="2006" name="Mol. Cell. Proteomics">
        <title>Comprehensive identification of phosphorylation sites in postsynaptic density preparations.</title>
        <authorList>
            <person name="Trinidad J.C."/>
            <person name="Specht C.G."/>
            <person name="Thalhammer A."/>
            <person name="Schoepfer R."/>
            <person name="Burlingame A.L."/>
        </authorList>
    </citation>
    <scope>IDENTIFICATION BY MASS SPECTROMETRY [LARGE SCALE ANALYSIS]</scope>
    <source>
        <tissue>Brain</tissue>
    </source>
</reference>
<reference key="6">
    <citation type="journal article" date="2010" name="Cell">
        <title>A tissue-specific atlas of mouse protein phosphorylation and expression.</title>
        <authorList>
            <person name="Huttlin E.L."/>
            <person name="Jedrychowski M.P."/>
            <person name="Elias J.E."/>
            <person name="Goswami T."/>
            <person name="Rad R."/>
            <person name="Beausoleil S.A."/>
            <person name="Villen J."/>
            <person name="Haas W."/>
            <person name="Sowa M.E."/>
            <person name="Gygi S.P."/>
        </authorList>
    </citation>
    <scope>IDENTIFICATION BY MASS SPECTROMETRY [LARGE SCALE ANALYSIS]</scope>
    <source>
        <tissue>Brain</tissue>
        <tissue>Brown adipose tissue</tissue>
        <tissue>Heart</tissue>
        <tissue>Kidney</tissue>
        <tissue>Liver</tissue>
        <tissue>Lung</tissue>
        <tissue>Pancreas</tissue>
        <tissue>Spleen</tissue>
        <tissue>Testis</tissue>
    </source>
</reference>
<reference key="7">
    <citation type="journal article" date="2013" name="Mol. Cell">
        <title>SIRT5-mediated lysine desuccinylation impacts diverse metabolic pathways.</title>
        <authorList>
            <person name="Park J."/>
            <person name="Chen Y."/>
            <person name="Tishkoff D.X."/>
            <person name="Peng C."/>
            <person name="Tan M."/>
            <person name="Dai L."/>
            <person name="Xie Z."/>
            <person name="Zhang Y."/>
            <person name="Zwaans B.M."/>
            <person name="Skinner M.E."/>
            <person name="Lombard D.B."/>
            <person name="Zhao Y."/>
        </authorList>
    </citation>
    <scope>SUCCINYLATION [LARGE SCALE ANALYSIS] AT LYS-468 AND LYS-542</scope>
    <scope>IDENTIFICATION BY MASS SPECTROMETRY [LARGE SCALE ANALYSIS]</scope>
    <source>
        <tissue>Embryonic fibroblast</tissue>
    </source>
</reference>
<sequence length="642" mass="67942">MWRVCARRARSAVPRDGFRARWAALKEGPGAPCGSPRIGPAAVRCGSGIPRYGVRSLCGWSSGSGTVPRNRLLRQLLGSPSRRSYSLPPHQKVPLPSLSPTMQAGTIARWEKKEGEKISEGDLIAEVETDKATVGFESLEECYMAKILVPEGTRDVPVGSIICITVEKPQDIEAFKNYTLDLAAAAAPQAAPAAAPAPAAAPAAPSASAPGSSYPTHMQIVLPALSPTMTMGTVQRWEKKVGEKLSEGDLLAEIETDKATIGFEVQEEGYLAKILVPEGTRDVPLGAPLCIIVEKQEDIAAFADYRPTEVTSLKPQAAPPAPPPVAAVPPTPQPVAPTPSAAPAGPKGRVFVSPLAKKLAAEKGIDLTQVKGTGPEGRIIKKDIDSFVPSKAAPAAAAAMAPPGPRVAPAPAGVFTDIPISNIRRVIAQRLMQSKQTIPHYYLSVDVNMGEVLLVRKELNKMLEGKGKISVNDFIIKASALACLKVPEANSSWMDTVIRQNHVVDVSVAVSTPAGLITPIVFNAHIKGLETIASDVVSLASKAREGKLQPHEFQGGTFTISNLGMFGIKNFSAIINPPQACILAIGASEDKLIPADNEKGFDVASVMSVTLSCDHRVVDGAVGAQWLAEFKKYLEKPITMLL</sequence>
<protein>
    <recommendedName>
        <fullName evidence="10">Dihydrolipoyllysine-residue acetyltransferase component of pyruvate dehydrogenase complex, mitochondrial</fullName>
        <ecNumber evidence="4">2.3.1.12</ecNumber>
    </recommendedName>
    <alternativeName>
        <fullName evidence="2">Dihydrolipoamide acetyltransferase component of pyruvate dehydrogenase complex</fullName>
    </alternativeName>
    <alternativeName>
        <fullName>Pyruvate dehydrogenase complex component E2</fullName>
        <shortName evidence="4">PDC-E2</shortName>
        <shortName>PDCE2</shortName>
    </alternativeName>
</protein>